<evidence type="ECO:0000250" key="1"/>
<evidence type="ECO:0000256" key="2">
    <source>
        <dbReference type="SAM" id="MobiDB-lite"/>
    </source>
</evidence>
<evidence type="ECO:0000305" key="3"/>
<dbReference type="EMBL" id="DS231620">
    <property type="protein sequence ID" value="EDU49356.1"/>
    <property type="molecule type" value="Genomic_DNA"/>
</dbReference>
<dbReference type="RefSeq" id="XP_001936769.1">
    <property type="nucleotide sequence ID" value="XM_001936734.1"/>
</dbReference>
<dbReference type="SMR" id="B2W8X8"/>
<dbReference type="FunCoup" id="B2W8X8">
    <property type="interactions" value="877"/>
</dbReference>
<dbReference type="STRING" id="426418.B2W8X8"/>
<dbReference type="EnsemblFungi" id="EDU49356">
    <property type="protein sequence ID" value="EDU49356"/>
    <property type="gene ID" value="PTRG_06436"/>
</dbReference>
<dbReference type="GeneID" id="6344695"/>
<dbReference type="KEGG" id="ptrr:6344695"/>
<dbReference type="eggNOG" id="KOG2188">
    <property type="taxonomic scope" value="Eukaryota"/>
</dbReference>
<dbReference type="HOGENOM" id="CLU_008720_1_1_1"/>
<dbReference type="InParanoid" id="B2W8X8"/>
<dbReference type="OMA" id="HHLVRNF"/>
<dbReference type="OrthoDB" id="20747at28556"/>
<dbReference type="Proteomes" id="UP000001471">
    <property type="component" value="Unassembled WGS sequence"/>
</dbReference>
<dbReference type="GO" id="GO:0030686">
    <property type="term" value="C:90S preribosome"/>
    <property type="evidence" value="ECO:0007669"/>
    <property type="project" value="TreeGrafter"/>
</dbReference>
<dbReference type="GO" id="GO:0005730">
    <property type="term" value="C:nucleolus"/>
    <property type="evidence" value="ECO:0007669"/>
    <property type="project" value="UniProtKB-SubCell"/>
</dbReference>
<dbReference type="GO" id="GO:0030688">
    <property type="term" value="C:preribosome, small subunit precursor"/>
    <property type="evidence" value="ECO:0007669"/>
    <property type="project" value="TreeGrafter"/>
</dbReference>
<dbReference type="GO" id="GO:0003723">
    <property type="term" value="F:RNA binding"/>
    <property type="evidence" value="ECO:0007669"/>
    <property type="project" value="InterPro"/>
</dbReference>
<dbReference type="GO" id="GO:0000480">
    <property type="term" value="P:endonucleolytic cleavage in 5'-ETS of tricistronic rRNA transcript (SSU-rRNA, 5.8S rRNA, LSU-rRNA)"/>
    <property type="evidence" value="ECO:0007669"/>
    <property type="project" value="TreeGrafter"/>
</dbReference>
<dbReference type="GO" id="GO:0000447">
    <property type="term" value="P:endonucleolytic cleavage in ITS1 to separate SSU-rRNA from 5.8S rRNA and LSU-rRNA from tricistronic rRNA transcript (SSU-rRNA, 5.8S rRNA, LSU-rRNA)"/>
    <property type="evidence" value="ECO:0007669"/>
    <property type="project" value="TreeGrafter"/>
</dbReference>
<dbReference type="GO" id="GO:0000472">
    <property type="term" value="P:endonucleolytic cleavage to generate mature 5'-end of SSU-rRNA from (SSU-rRNA, 5.8S rRNA, LSU-rRNA)"/>
    <property type="evidence" value="ECO:0007669"/>
    <property type="project" value="TreeGrafter"/>
</dbReference>
<dbReference type="GO" id="GO:0000056">
    <property type="term" value="P:ribosomal small subunit export from nucleus"/>
    <property type="evidence" value="ECO:0007669"/>
    <property type="project" value="TreeGrafter"/>
</dbReference>
<dbReference type="Gene3D" id="1.25.10.10">
    <property type="entry name" value="Leucine-rich Repeat Variant"/>
    <property type="match status" value="2"/>
</dbReference>
<dbReference type="InterPro" id="IPR011989">
    <property type="entry name" value="ARM-like"/>
</dbReference>
<dbReference type="InterPro" id="IPR016024">
    <property type="entry name" value="ARM-type_fold"/>
</dbReference>
<dbReference type="InterPro" id="IPR040000">
    <property type="entry name" value="NOP9"/>
</dbReference>
<dbReference type="InterPro" id="IPR001313">
    <property type="entry name" value="Pumilio_RNA-bd_rpt"/>
</dbReference>
<dbReference type="PANTHER" id="PTHR13102">
    <property type="entry name" value="NUCLEOLAR PROTEIN 9"/>
    <property type="match status" value="1"/>
</dbReference>
<dbReference type="PANTHER" id="PTHR13102:SF0">
    <property type="entry name" value="NUCLEOLAR PROTEIN 9"/>
    <property type="match status" value="1"/>
</dbReference>
<dbReference type="Pfam" id="PF22493">
    <property type="entry name" value="PUF_NOP9"/>
    <property type="match status" value="1"/>
</dbReference>
<dbReference type="SMART" id="SM00025">
    <property type="entry name" value="Pumilio"/>
    <property type="match status" value="5"/>
</dbReference>
<dbReference type="SUPFAM" id="SSF48371">
    <property type="entry name" value="ARM repeat"/>
    <property type="match status" value="1"/>
</dbReference>
<accession>B2W8X8</accession>
<proteinExistence type="inferred from homology"/>
<feature type="chain" id="PRO_0000407831" description="Nucleolar protein 9">
    <location>
        <begin position="1"/>
        <end position="700"/>
    </location>
</feature>
<feature type="repeat" description="Pumilio 1">
    <location>
        <begin position="200"/>
        <end position="239"/>
    </location>
</feature>
<feature type="repeat" description="Pumilio 2">
    <location>
        <begin position="336"/>
        <end position="371"/>
    </location>
</feature>
<feature type="repeat" description="Pumilio 3">
    <location>
        <begin position="372"/>
        <end position="412"/>
    </location>
</feature>
<feature type="repeat" description="Pumilio 4">
    <location>
        <begin position="509"/>
        <end position="547"/>
    </location>
</feature>
<feature type="region of interest" description="Disordered" evidence="2">
    <location>
        <begin position="1"/>
        <end position="49"/>
    </location>
</feature>
<feature type="region of interest" description="Disordered" evidence="2">
    <location>
        <begin position="634"/>
        <end position="655"/>
    </location>
</feature>
<feature type="region of interest" description="Disordered" evidence="2">
    <location>
        <begin position="667"/>
        <end position="700"/>
    </location>
</feature>
<feature type="compositionally biased region" description="Basic and acidic residues" evidence="2">
    <location>
        <begin position="10"/>
        <end position="39"/>
    </location>
</feature>
<feature type="compositionally biased region" description="Polar residues" evidence="2">
    <location>
        <begin position="684"/>
        <end position="700"/>
    </location>
</feature>
<keyword id="KW-0539">Nucleus</keyword>
<keyword id="KW-1185">Reference proteome</keyword>
<keyword id="KW-0677">Repeat</keyword>
<keyword id="KW-0690">Ribosome biogenesis</keyword>
<keyword id="KW-0698">rRNA processing</keyword>
<gene>
    <name type="primary">nop9</name>
    <name type="ORF">PTRG_06436</name>
</gene>
<name>NOP9_PYRTR</name>
<reference key="1">
    <citation type="journal article" date="2013" name="G3 (Bethesda)">
        <title>Comparative genomics of a plant-pathogenic fungus, Pyrenophora tritici-repentis, reveals transduplication and the impact of repeat elements on pathogenicity and population divergence.</title>
        <authorList>
            <person name="Manning V.A."/>
            <person name="Pandelova I."/>
            <person name="Dhillon B."/>
            <person name="Wilhelm L.J."/>
            <person name="Goodwin S.B."/>
            <person name="Berlin A.M."/>
            <person name="Figueroa M."/>
            <person name="Freitag M."/>
            <person name="Hane J.K."/>
            <person name="Henrissat B."/>
            <person name="Holman W.H."/>
            <person name="Kodira C.D."/>
            <person name="Martin J."/>
            <person name="Oliver R.P."/>
            <person name="Robbertse B."/>
            <person name="Schackwitz W."/>
            <person name="Schwartz D.C."/>
            <person name="Spatafora J.W."/>
            <person name="Turgeon B.G."/>
            <person name="Yandava C."/>
            <person name="Young S."/>
            <person name="Zhou S."/>
            <person name="Zeng Q."/>
            <person name="Grigoriev I.V."/>
            <person name="Ma L.-J."/>
            <person name="Ciuffetti L.M."/>
        </authorList>
    </citation>
    <scope>NUCLEOTIDE SEQUENCE [LARGE SCALE GENOMIC DNA]</scope>
    <source>
        <strain>Pt-1C-BFP</strain>
    </source>
</reference>
<protein>
    <recommendedName>
        <fullName>Nucleolar protein 9</fullName>
    </recommendedName>
    <alternativeName>
        <fullName>Pumilio domain-containing protein nop9</fullName>
    </alternativeName>
</protein>
<sequence length="700" mass="78461">MPKEHKKRGRREDQKKRKRDHDDESASKRFRKDDIEHVQAENPLQHVANDAPRQDAAPFYGMLDEQEQEYFKKADEMLELNQFESPEDRRIFLASVWKEAEGKELKMATSQTSRLLERLILLASEDQLKSLFQKFSGHFLNLVQNRFASHCCETLFIQAAPAVSQENASVKTEALNTPPASDPDEIIVSMENLFLYTLGELEGNIGFLMTEKYASHVLRVLLVILSGEPLEKQGKSVTQSKKKEKVTISGAGDERILEKRVVPESFLEALEKVISDSVSGIEAHYLRSLAIHPLGGPTLQLLLKLELSHFGKSRAKDEKSIIHRLLPDNPIAEGTESAILINGLVYDSVGSHLLETIIEHAPGKLFKQIYGEFFKERMGSLARNEIAGYVVGKILERLGKDDLEEAMRQIVDQIPSLVERNRTAPIKTLIERCVAREVDCSPIKAQLETAYAGPHGFEVTRILKLNEDDGKPRARHGESNEKVHGSLLAQTMMTVDGPLGQLVFDSLANLSPELSIQLARDGTASRTLQAALVSRNATVIFRRKMIQQFYGKIGELALDPKASHVVDAIWYGTVGLAFIRERIAEELAENENSLRESQVGRKVWKNWQMDLYKRRRNDWVAQARTTAGNEVFQSFPDESQSDVAAPARTHRASRHMSAIELARQKFAAAKAAQAKDGKKPKKGNNPTNGSGETPRSLVAQ</sequence>
<comment type="function">
    <text evidence="1">RNA-binding nucleolar protein required for pre-rRNA processing. Involved in production of 18S rRNA and assembly of small ribosomal subunit (By similarity).</text>
</comment>
<comment type="subcellular location">
    <subcellularLocation>
        <location evidence="1">Nucleus</location>
        <location evidence="1">Nucleolus</location>
    </subcellularLocation>
</comment>
<comment type="similarity">
    <text evidence="3">Belongs to the NOP9 family.</text>
</comment>
<organism>
    <name type="scientific">Pyrenophora tritici-repentis (strain Pt-1C-BFP)</name>
    <name type="common">Wheat tan spot fungus</name>
    <name type="synonym">Drechslera tritici-repentis</name>
    <dbReference type="NCBI Taxonomy" id="426418"/>
    <lineage>
        <taxon>Eukaryota</taxon>
        <taxon>Fungi</taxon>
        <taxon>Dikarya</taxon>
        <taxon>Ascomycota</taxon>
        <taxon>Pezizomycotina</taxon>
        <taxon>Dothideomycetes</taxon>
        <taxon>Pleosporomycetidae</taxon>
        <taxon>Pleosporales</taxon>
        <taxon>Pleosporineae</taxon>
        <taxon>Pleosporaceae</taxon>
        <taxon>Pyrenophora</taxon>
    </lineage>
</organism>